<dbReference type="EC" id="2.7.11.1"/>
<dbReference type="EMBL" id="X59720">
    <property type="protein sequence ID" value="CAC42961.1"/>
    <property type="molecule type" value="Genomic_DNA"/>
</dbReference>
<dbReference type="EMBL" id="BK006937">
    <property type="protein sequence ID" value="DAA07461.1"/>
    <property type="molecule type" value="Genomic_DNA"/>
</dbReference>
<dbReference type="PIR" id="S74283">
    <property type="entry name" value="S74283"/>
</dbReference>
<dbReference type="RefSeq" id="NP_009907.2">
    <property type="nucleotide sequence ID" value="NM_001178670.1"/>
</dbReference>
<dbReference type="PDB" id="3OSM">
    <property type="method" value="X-ray"/>
    <property type="resolution" value="1.70 A"/>
    <property type="chains" value="A=917-1037"/>
</dbReference>
<dbReference type="PDB" id="3OST">
    <property type="method" value="X-ray"/>
    <property type="resolution" value="1.69 A"/>
    <property type="chains" value="A=917-1037"/>
</dbReference>
<dbReference type="PDBsum" id="3OSM"/>
<dbReference type="PDBsum" id="3OST"/>
<dbReference type="SMR" id="P25389"/>
<dbReference type="BioGRID" id="30960">
    <property type="interactions" value="150"/>
</dbReference>
<dbReference type="DIP" id="DIP-1779N"/>
<dbReference type="FunCoup" id="P25389">
    <property type="interactions" value="317"/>
</dbReference>
<dbReference type="IntAct" id="P25389">
    <property type="interactions" value="14"/>
</dbReference>
<dbReference type="MINT" id="P25389"/>
<dbReference type="STRING" id="4932.YCL024W"/>
<dbReference type="CarbonylDB" id="P25389"/>
<dbReference type="GlyGen" id="P25389">
    <property type="glycosylation" value="1 site"/>
</dbReference>
<dbReference type="iPTMnet" id="P25389"/>
<dbReference type="PaxDb" id="4932-YCL024W"/>
<dbReference type="PeptideAtlas" id="P25389"/>
<dbReference type="EnsemblFungi" id="YCL024W_mRNA">
    <property type="protein sequence ID" value="YCL024W"/>
    <property type="gene ID" value="YCL024W"/>
</dbReference>
<dbReference type="GeneID" id="850334"/>
<dbReference type="KEGG" id="sce:YCL024W"/>
<dbReference type="AGR" id="SGD:S000000529"/>
<dbReference type="SGD" id="S000000529">
    <property type="gene designation" value="KCC4"/>
</dbReference>
<dbReference type="VEuPathDB" id="FungiDB:YCL024W"/>
<dbReference type="eggNOG" id="KOG0583">
    <property type="taxonomic scope" value="Eukaryota"/>
</dbReference>
<dbReference type="GeneTree" id="ENSGT00940000166887"/>
<dbReference type="HOGENOM" id="CLU_005276_1_0_1"/>
<dbReference type="InParanoid" id="P25389"/>
<dbReference type="OrthoDB" id="504170at2759"/>
<dbReference type="BioCyc" id="YEAST:G3O-29286-MONOMER"/>
<dbReference type="BioGRID-ORCS" id="850334">
    <property type="hits" value="0 hits in 13 CRISPR screens"/>
</dbReference>
<dbReference type="EvolutionaryTrace" id="P25389"/>
<dbReference type="PRO" id="PR:P25389"/>
<dbReference type="Proteomes" id="UP000002311">
    <property type="component" value="Chromosome III"/>
</dbReference>
<dbReference type="RNAct" id="P25389">
    <property type="molecule type" value="protein"/>
</dbReference>
<dbReference type="GO" id="GO:0005935">
    <property type="term" value="C:cellular bud neck"/>
    <property type="evidence" value="ECO:0000314"/>
    <property type="project" value="SGD"/>
</dbReference>
<dbReference type="GO" id="GO:0032174">
    <property type="term" value="C:cellular bud neck septin collar"/>
    <property type="evidence" value="ECO:0000314"/>
    <property type="project" value="SGD"/>
</dbReference>
<dbReference type="GO" id="GO:0005737">
    <property type="term" value="C:cytoplasm"/>
    <property type="evidence" value="ECO:0000318"/>
    <property type="project" value="GO_Central"/>
</dbReference>
<dbReference type="GO" id="GO:0000131">
    <property type="term" value="C:incipient cellular bud site"/>
    <property type="evidence" value="ECO:0000314"/>
    <property type="project" value="SGD"/>
</dbReference>
<dbReference type="GO" id="GO:0005634">
    <property type="term" value="C:nucleus"/>
    <property type="evidence" value="ECO:0000318"/>
    <property type="project" value="GO_Central"/>
</dbReference>
<dbReference type="GO" id="GO:0005886">
    <property type="term" value="C:plasma membrane"/>
    <property type="evidence" value="ECO:0000314"/>
    <property type="project" value="UniProtKB"/>
</dbReference>
<dbReference type="GO" id="GO:0005940">
    <property type="term" value="C:septin ring"/>
    <property type="evidence" value="ECO:0000314"/>
    <property type="project" value="SGD"/>
</dbReference>
<dbReference type="GO" id="GO:0005524">
    <property type="term" value="F:ATP binding"/>
    <property type="evidence" value="ECO:0007669"/>
    <property type="project" value="UniProtKB-KW"/>
</dbReference>
<dbReference type="GO" id="GO:0070300">
    <property type="term" value="F:phosphatidic acid binding"/>
    <property type="evidence" value="ECO:0000314"/>
    <property type="project" value="UniProtKB"/>
</dbReference>
<dbReference type="GO" id="GO:0005546">
    <property type="term" value="F:phosphatidylinositol-4,5-bisphosphate binding"/>
    <property type="evidence" value="ECO:0000314"/>
    <property type="project" value="UniProtKB"/>
</dbReference>
<dbReference type="GO" id="GO:0001786">
    <property type="term" value="F:phosphatidylserine binding"/>
    <property type="evidence" value="ECO:0000314"/>
    <property type="project" value="UniProtKB"/>
</dbReference>
<dbReference type="GO" id="GO:0004672">
    <property type="term" value="F:protein kinase activity"/>
    <property type="evidence" value="ECO:0007005"/>
    <property type="project" value="SGD"/>
</dbReference>
<dbReference type="GO" id="GO:0106310">
    <property type="term" value="F:protein serine kinase activity"/>
    <property type="evidence" value="ECO:0007669"/>
    <property type="project" value="RHEA"/>
</dbReference>
<dbReference type="GO" id="GO:0004674">
    <property type="term" value="F:protein serine/threonine kinase activity"/>
    <property type="evidence" value="ECO:0000318"/>
    <property type="project" value="GO_Central"/>
</dbReference>
<dbReference type="GO" id="GO:0007117">
    <property type="term" value="P:budding cell bud growth"/>
    <property type="evidence" value="ECO:0000315"/>
    <property type="project" value="SGD"/>
</dbReference>
<dbReference type="GO" id="GO:0000086">
    <property type="term" value="P:G2/M transition of mitotic cell cycle"/>
    <property type="evidence" value="ECO:0000318"/>
    <property type="project" value="GO_Central"/>
</dbReference>
<dbReference type="GO" id="GO:0044879">
    <property type="term" value="P:mitotic morphogenesis checkpoint signaling"/>
    <property type="evidence" value="ECO:0000315"/>
    <property type="project" value="SGD"/>
</dbReference>
<dbReference type="GO" id="GO:0008360">
    <property type="term" value="P:regulation of cell shape"/>
    <property type="evidence" value="ECO:0007669"/>
    <property type="project" value="UniProtKB-KW"/>
</dbReference>
<dbReference type="GO" id="GO:0000921">
    <property type="term" value="P:septin ring assembly"/>
    <property type="evidence" value="ECO:0000315"/>
    <property type="project" value="SGD"/>
</dbReference>
<dbReference type="CDD" id="cd12194">
    <property type="entry name" value="Kcc4p_like_C"/>
    <property type="match status" value="1"/>
</dbReference>
<dbReference type="FunFam" id="3.30.200.20:FF:000042">
    <property type="entry name" value="Aurora kinase A"/>
    <property type="match status" value="1"/>
</dbReference>
<dbReference type="FunFam" id="3.30.310.220:FF:000001">
    <property type="entry name" value="Probable serine/threonine-protein kinase KCC4"/>
    <property type="match status" value="1"/>
</dbReference>
<dbReference type="FunFam" id="1.10.510.10:FF:000394">
    <property type="entry name" value="Serine/threonine-protein kinase HSL1"/>
    <property type="match status" value="1"/>
</dbReference>
<dbReference type="Gene3D" id="3.30.310.220">
    <property type="entry name" value="Fungal kinase associated-1 domain"/>
    <property type="match status" value="1"/>
</dbReference>
<dbReference type="Gene3D" id="1.10.510.10">
    <property type="entry name" value="Transferase(Phosphotransferase) domain 1"/>
    <property type="match status" value="1"/>
</dbReference>
<dbReference type="InterPro" id="IPR031850">
    <property type="entry name" value="Fungal_KA1_dom"/>
</dbReference>
<dbReference type="InterPro" id="IPR043024">
    <property type="entry name" value="KA1_sf_fungal"/>
</dbReference>
<dbReference type="InterPro" id="IPR011009">
    <property type="entry name" value="Kinase-like_dom_sf"/>
</dbReference>
<dbReference type="InterPro" id="IPR000719">
    <property type="entry name" value="Prot_kinase_dom"/>
</dbReference>
<dbReference type="InterPro" id="IPR017441">
    <property type="entry name" value="Protein_kinase_ATP_BS"/>
</dbReference>
<dbReference type="InterPro" id="IPR008271">
    <property type="entry name" value="Ser/Thr_kinase_AS"/>
</dbReference>
<dbReference type="PANTHER" id="PTHR24346">
    <property type="entry name" value="MAP/MICROTUBULE AFFINITY-REGULATING KINASE"/>
    <property type="match status" value="1"/>
</dbReference>
<dbReference type="PANTHER" id="PTHR24346:SF110">
    <property type="entry name" value="NON-SPECIFIC SERINE_THREONINE PROTEIN KINASE"/>
    <property type="match status" value="1"/>
</dbReference>
<dbReference type="Pfam" id="PF16797">
    <property type="entry name" value="Fungal_KA1"/>
    <property type="match status" value="1"/>
</dbReference>
<dbReference type="Pfam" id="PF00069">
    <property type="entry name" value="Pkinase"/>
    <property type="match status" value="1"/>
</dbReference>
<dbReference type="SMART" id="SM00220">
    <property type="entry name" value="S_TKc"/>
    <property type="match status" value="1"/>
</dbReference>
<dbReference type="SUPFAM" id="SSF56112">
    <property type="entry name" value="Protein kinase-like (PK-like)"/>
    <property type="match status" value="1"/>
</dbReference>
<dbReference type="PROSITE" id="PS00107">
    <property type="entry name" value="PROTEIN_KINASE_ATP"/>
    <property type="match status" value="1"/>
</dbReference>
<dbReference type="PROSITE" id="PS50011">
    <property type="entry name" value="PROTEIN_KINASE_DOM"/>
    <property type="match status" value="1"/>
</dbReference>
<dbReference type="PROSITE" id="PS00108">
    <property type="entry name" value="PROTEIN_KINASE_ST"/>
    <property type="match status" value="1"/>
</dbReference>
<organism>
    <name type="scientific">Saccharomyces cerevisiae (strain ATCC 204508 / S288c)</name>
    <name type="common">Baker's yeast</name>
    <dbReference type="NCBI Taxonomy" id="559292"/>
    <lineage>
        <taxon>Eukaryota</taxon>
        <taxon>Fungi</taxon>
        <taxon>Dikarya</taxon>
        <taxon>Ascomycota</taxon>
        <taxon>Saccharomycotina</taxon>
        <taxon>Saccharomycetes</taxon>
        <taxon>Saccharomycetales</taxon>
        <taxon>Saccharomycetaceae</taxon>
        <taxon>Saccharomyces</taxon>
    </lineage>
</organism>
<keyword id="KW-0002">3D-structure</keyword>
<keyword id="KW-0067">ATP-binding</keyword>
<keyword id="KW-0131">Cell cycle</keyword>
<keyword id="KW-0132">Cell division</keyword>
<keyword id="KW-0133">Cell shape</keyword>
<keyword id="KW-0418">Kinase</keyword>
<keyword id="KW-0547">Nucleotide-binding</keyword>
<keyword id="KW-0597">Phosphoprotein</keyword>
<keyword id="KW-1185">Reference proteome</keyword>
<keyword id="KW-0723">Serine/threonine-protein kinase</keyword>
<keyword id="KW-0808">Transferase</keyword>
<proteinExistence type="evidence at protein level"/>
<comment type="function">
    <text evidence="5">Involved in regulation of bud growth during cell cycle and in septin organization. Plays a role in cell wall synthesis.</text>
</comment>
<comment type="catalytic activity">
    <reaction>
        <text>L-seryl-[protein] + ATP = O-phospho-L-seryl-[protein] + ADP + H(+)</text>
        <dbReference type="Rhea" id="RHEA:17989"/>
        <dbReference type="Rhea" id="RHEA-COMP:9863"/>
        <dbReference type="Rhea" id="RHEA-COMP:11604"/>
        <dbReference type="ChEBI" id="CHEBI:15378"/>
        <dbReference type="ChEBI" id="CHEBI:29999"/>
        <dbReference type="ChEBI" id="CHEBI:30616"/>
        <dbReference type="ChEBI" id="CHEBI:83421"/>
        <dbReference type="ChEBI" id="CHEBI:456216"/>
        <dbReference type="EC" id="2.7.11.1"/>
    </reaction>
</comment>
<comment type="catalytic activity">
    <reaction>
        <text>L-threonyl-[protein] + ATP = O-phospho-L-threonyl-[protein] + ADP + H(+)</text>
        <dbReference type="Rhea" id="RHEA:46608"/>
        <dbReference type="Rhea" id="RHEA-COMP:11060"/>
        <dbReference type="Rhea" id="RHEA-COMP:11605"/>
        <dbReference type="ChEBI" id="CHEBI:15378"/>
        <dbReference type="ChEBI" id="CHEBI:30013"/>
        <dbReference type="ChEBI" id="CHEBI:30616"/>
        <dbReference type="ChEBI" id="CHEBI:61977"/>
        <dbReference type="ChEBI" id="CHEBI:456216"/>
        <dbReference type="EC" id="2.7.11.1"/>
    </reaction>
</comment>
<comment type="subunit">
    <text evidence="4 5 7">Interacts with septin proteins, primarily with CDC11. Interacts with SWE1 and NAP1.</text>
</comment>
<comment type="interaction">
    <interactant intactId="EBI-9607">
        <id>P25389</id>
    </interactant>
    <interactant intactId="EBI-11850">
        <id>P25293</id>
        <label>NAP1</label>
    </interactant>
    <organismsDiffer>false</organismsDiffer>
    <experiments>6</experiments>
</comment>
<comment type="subcellular location">
    <subcellularLocation>
        <location evidence="4 8">Bud neck</location>
    </subcellularLocation>
</comment>
<comment type="miscellaneous">
    <text evidence="6">Present with 538 molecules/cell in log phase SD medium.</text>
</comment>
<comment type="similarity">
    <text evidence="9">Belongs to the protein kinase superfamily. CAMK Ser/Thr protein kinase family. NIM1 subfamily.</text>
</comment>
<accession>P25389</accession>
<accession>D6VQZ2</accession>
<accession>P87005</accession>
<accession>Q8NKJ8</accession>
<gene>
    <name type="primary">KCC4</name>
    <name type="ordered locus">YCL024W</name>
    <name type="ORF">YCL24W</name>
</gene>
<protein>
    <recommendedName>
        <fullName>Probable serine/threonine-protein kinase KCC4</fullName>
        <ecNumber>2.7.11.1</ecNumber>
    </recommendedName>
</protein>
<evidence type="ECO:0000255" key="1">
    <source>
        <dbReference type="PROSITE-ProRule" id="PRU00159"/>
    </source>
</evidence>
<evidence type="ECO:0000255" key="2">
    <source>
        <dbReference type="PROSITE-ProRule" id="PRU10027"/>
    </source>
</evidence>
<evidence type="ECO:0000256" key="3">
    <source>
        <dbReference type="SAM" id="MobiDB-lite"/>
    </source>
</evidence>
<evidence type="ECO:0000269" key="4">
    <source>
    </source>
</evidence>
<evidence type="ECO:0000269" key="5">
    <source>
    </source>
</evidence>
<evidence type="ECO:0000269" key="6">
    <source>
    </source>
</evidence>
<evidence type="ECO:0000269" key="7">
    <source>
    </source>
</evidence>
<evidence type="ECO:0000269" key="8">
    <source>
    </source>
</evidence>
<evidence type="ECO:0000305" key="9"/>
<evidence type="ECO:0007744" key="10">
    <source>
    </source>
</evidence>
<evidence type="ECO:0007744" key="11">
    <source>
    </source>
</evidence>
<evidence type="ECO:0007829" key="12">
    <source>
        <dbReference type="PDB" id="3OST"/>
    </source>
</evidence>
<name>KCC4_YEAST</name>
<sequence length="1037" mass="116475">MTVANTETHSAAKPSSTIGPWKLGETLGFGSTGKVQLAQHERTGHRTAVKVISKSIFNNNGNHSNDDSVLPYNIEREIVIMKLLSHPNVLSLYDVWETNNNLYLILEYAEKGELFNLLVDHGPLPEREAINCFRQIIIGISYCHALGIVHRDLKPENLLLDSFYNIKIADFGMAALQTDADLLETSCGSPHYAAPEIVSGLPYEGFASDVWSCGVILFALLTGRLPFDEENGNVRDLLLKVQKGQFEMPNDTEISRDAQDLIGKILVVDPRQRIKIRDILSHPLLKKYQTIKDSKSIKDLPRENTYLYPLADSNNHTSASIDDSILQNLVVLWHGRHADDIVSKLKENGTNKEKILYALLYRFKLDSVRGSNKKNRNKIKKTKKNKRSSTLSSSSSLLLNNRSIQSTPRRRTSKRHSREFSSSRKRSSFLLSSNPTDSSPIPLRSSKRITHINVASANTQATPSGVPNPHKRNSKKRSSKRLSYMPNTKRSSLTSKSLSNFTNLIDDDDWEYIEKDAKRTSSNFATLIDEIFEPEKFELAKREKAELQRKVQEAKRQSVNAQKINEDEFGSEVSDGMKELKKINDKVSSPLINYEFSQQELLQDIDTLLTNRYQLSSYTRPISRLDPGLTPVTETLPNNLKEKTALLQDTEKKIIETIRRSKFLGSLLNVRGGLSPGKSELAPIEESPIVSTTPLIYNDRMEPRRISDVEVPHFTRKSKHFTTANNRRSVLSLYAKDSIKDLNEFLIKEDPDLPPQGSTDNESRSEDPEIAESITDSRNIQYDEDDSKDGDNVNNDNILSDFPQGVGISQEYDMKDKNPNQSPISKSAEPTLVVKLPSLSSFQGKNASGLGLYQREPSKVTLPSLTSNNSSVGENIEDGAEKGTESEKIAASLSDDDLKEDNDKKDNDTVNAPTTVKKPPNSVLLKKFSKGKILELEIHAKIPEKRLYEGLHKLLEGWKQYGLKNLVFNITNMIITGKLVNDSILFLRSTLFEIMVLPNGDGRSLIKFNKKTGSTKTLTKLATEIQIILQKEGVLDK</sequence>
<reference key="1">
    <citation type="journal article" date="1999" name="Genes Dev.">
        <title>Nim1-related kinases coordinate cell cycle progression with the organization of the peripheral cytoskeleton in yeast.</title>
        <authorList>
            <person name="Barral Y."/>
            <person name="Parra M."/>
            <person name="Bidlingmaier S."/>
            <person name="Snyder M."/>
        </authorList>
    </citation>
    <scope>NUCLEOTIDE SEQUENCE [GENOMIC DNA]</scope>
    <scope>SUBCELLULAR LOCATION</scope>
</reference>
<reference key="2">
    <citation type="journal article" date="2003" name="Genes Genet. Syst.">
        <title>The Saccharomyces cerevisiae bud-neck proteins Kcc4 and Gin4 have distinct but partially-overlapping cellular functions.</title>
        <authorList>
            <person name="Okuzaki D."/>
            <person name="Watanabe T."/>
            <person name="Tanaka S."/>
            <person name="Nojima H."/>
        </authorList>
    </citation>
    <scope>NUCLEOTIDE SEQUENCE [GENOMIC DNA]</scope>
    <scope>FUNCTION</scope>
    <scope>INTERACTION WITH SWE1</scope>
</reference>
<reference key="3">
    <citation type="journal article" date="1992" name="Nature">
        <title>The complete DNA sequence of yeast chromosome III.</title>
        <authorList>
            <person name="Oliver S.G."/>
            <person name="van der Aart Q.J.M."/>
            <person name="Agostoni-Carbone M.L."/>
            <person name="Aigle M."/>
            <person name="Alberghina L."/>
            <person name="Alexandraki D."/>
            <person name="Antoine G."/>
            <person name="Anwar R."/>
            <person name="Ballesta J.P.G."/>
            <person name="Benit P."/>
            <person name="Berben G."/>
            <person name="Bergantino E."/>
            <person name="Biteau N."/>
            <person name="Bolle P.-A."/>
            <person name="Bolotin-Fukuhara M."/>
            <person name="Brown A."/>
            <person name="Brown A.J.P."/>
            <person name="Buhler J.-M."/>
            <person name="Carcano C."/>
            <person name="Carignani G."/>
            <person name="Cederberg H."/>
            <person name="Chanet R."/>
            <person name="Contreras R."/>
            <person name="Crouzet M."/>
            <person name="Daignan-Fornier B."/>
            <person name="Defoor E."/>
            <person name="Delgado M.D."/>
            <person name="Demolder J."/>
            <person name="Doira C."/>
            <person name="Dubois E."/>
            <person name="Dujon B."/>
            <person name="Duesterhoeft A."/>
            <person name="Erdmann D."/>
            <person name="Esteban M."/>
            <person name="Fabre F."/>
            <person name="Fairhead C."/>
            <person name="Faye G."/>
            <person name="Feldmann H."/>
            <person name="Fiers W."/>
            <person name="Francingues-Gaillard M.-C."/>
            <person name="Franco L."/>
            <person name="Frontali L."/>
            <person name="Fukuhara H."/>
            <person name="Fuller L.J."/>
            <person name="Galland P."/>
            <person name="Gent M.E."/>
            <person name="Gigot D."/>
            <person name="Gilliquet V."/>
            <person name="Glansdorff N."/>
            <person name="Goffeau A."/>
            <person name="Grenson M."/>
            <person name="Grisanti P."/>
            <person name="Grivell L.A."/>
            <person name="de Haan M."/>
            <person name="Haasemann M."/>
            <person name="Hatat D."/>
            <person name="Hoenicka J."/>
            <person name="Hegemann J.H."/>
            <person name="Herbert C.J."/>
            <person name="Hilger F."/>
            <person name="Hohmann S."/>
            <person name="Hollenberg C.P."/>
            <person name="Huse K."/>
            <person name="Iborra F."/>
            <person name="Indge K.J."/>
            <person name="Isono K."/>
            <person name="Jacq C."/>
            <person name="Jacquet M."/>
            <person name="James C.M."/>
            <person name="Jauniaux J.-C."/>
            <person name="Jia Y."/>
            <person name="Jimenez A."/>
            <person name="Kelly A."/>
            <person name="Kleinhans U."/>
            <person name="Kreisl P."/>
            <person name="Lanfranchi G."/>
            <person name="Lewis C."/>
            <person name="van der Linden C.G."/>
            <person name="Lucchini G."/>
            <person name="Lutzenkirchen K."/>
            <person name="Maat M.J."/>
            <person name="Mallet L."/>
            <person name="Mannhaupt G."/>
            <person name="Martegani E."/>
            <person name="Mathieu A."/>
            <person name="Maurer C.T.C."/>
            <person name="McConnell D."/>
            <person name="McKee R.A."/>
            <person name="Messenguy F."/>
            <person name="Mewes H.-W."/>
            <person name="Molemans F."/>
            <person name="Montague M.A."/>
            <person name="Muzi Falconi M."/>
            <person name="Navas L."/>
            <person name="Newlon C.S."/>
            <person name="Noone D."/>
            <person name="Pallier C."/>
            <person name="Panzeri L."/>
            <person name="Pearson B.M."/>
            <person name="Perea J."/>
            <person name="Philippsen P."/>
            <person name="Pierard A."/>
            <person name="Planta R.J."/>
            <person name="Plevani P."/>
            <person name="Poetsch B."/>
            <person name="Pohl F.M."/>
            <person name="Purnelle B."/>
            <person name="Ramezani Rad M."/>
            <person name="Rasmussen S.W."/>
            <person name="Raynal A."/>
            <person name="Remacha M.A."/>
            <person name="Richterich P."/>
            <person name="Roberts A.B."/>
            <person name="Rodriguez F."/>
            <person name="Sanz E."/>
            <person name="Schaaff-Gerstenschlaeger I."/>
            <person name="Scherens B."/>
            <person name="Schweitzer B."/>
            <person name="Shu Y."/>
            <person name="Skala J."/>
            <person name="Slonimski P.P."/>
            <person name="Sor F."/>
            <person name="Soustelle C."/>
            <person name="Spiegelberg R."/>
            <person name="Stateva L.I."/>
            <person name="Steensma H.Y."/>
            <person name="Steiner S."/>
            <person name="Thierry A."/>
            <person name="Thireos G."/>
            <person name="Tzermia M."/>
            <person name="Urrestarazu L.A."/>
            <person name="Valle G."/>
            <person name="Vetter I."/>
            <person name="van Vliet-Reedijk J.C."/>
            <person name="Voet M."/>
            <person name="Volckaert G."/>
            <person name="Vreken P."/>
            <person name="Wang H."/>
            <person name="Warmington J.R."/>
            <person name="von Wettstein D."/>
            <person name="Wicksteed B.L."/>
            <person name="Wilson C."/>
            <person name="Wurst H."/>
            <person name="Xu G."/>
            <person name="Yoshikawa A."/>
            <person name="Zimmermann F.K."/>
            <person name="Sgouros J.G."/>
        </authorList>
    </citation>
    <scope>NUCLEOTIDE SEQUENCE [LARGE SCALE GENOMIC DNA]</scope>
    <source>
        <strain>ATCC 204508 / S288c</strain>
    </source>
</reference>
<reference key="4">
    <citation type="submission" date="1996-01" db="EMBL/GenBank/DDBJ databases">
        <authorList>
            <person name="Gromadka R."/>
        </authorList>
    </citation>
    <scope>SEQUENCE REVISION</scope>
</reference>
<reference key="5">
    <citation type="submission" date="2001-06" db="EMBL/GenBank/DDBJ databases">
        <authorList>
            <person name="Valles G."/>
            <person name="Volckaerts G."/>
        </authorList>
    </citation>
    <scope>SEQUENCE REVISION</scope>
</reference>
<reference key="6">
    <citation type="journal article" date="2014" name="G3 (Bethesda)">
        <title>The reference genome sequence of Saccharomyces cerevisiae: Then and now.</title>
        <authorList>
            <person name="Engel S.R."/>
            <person name="Dietrich F.S."/>
            <person name="Fisk D.G."/>
            <person name="Binkley G."/>
            <person name="Balakrishnan R."/>
            <person name="Costanzo M.C."/>
            <person name="Dwight S.S."/>
            <person name="Hitz B.C."/>
            <person name="Karra K."/>
            <person name="Nash R.S."/>
            <person name="Weng S."/>
            <person name="Wong E.D."/>
            <person name="Lloyd P."/>
            <person name="Skrzypek M.S."/>
            <person name="Miyasato S.R."/>
            <person name="Simison M."/>
            <person name="Cherry J.M."/>
        </authorList>
    </citation>
    <scope>GENOME REANNOTATION</scope>
    <source>
        <strain>ATCC 204508 / S288c</strain>
    </source>
</reference>
<reference key="7">
    <citation type="journal article" date="2001" name="FEBS Lett.">
        <title>Kcc4 associates with septin proteins of Saccharomyces cerevisiae.</title>
        <authorList>
            <person name="Okuzaki D."/>
            <person name="Nojima H."/>
        </authorList>
    </citation>
    <scope>INTERACTION WITH SEPTIN PROTEINS</scope>
    <scope>SUBCELLULAR LOCATION</scope>
</reference>
<reference key="8">
    <citation type="journal article" date="2003" name="Nature">
        <title>Global analysis of protein expression in yeast.</title>
        <authorList>
            <person name="Ghaemmaghami S."/>
            <person name="Huh W.-K."/>
            <person name="Bower K."/>
            <person name="Howson R.W."/>
            <person name="Belle A."/>
            <person name="Dephoure N."/>
            <person name="O'Shea E.K."/>
            <person name="Weissman J.S."/>
        </authorList>
    </citation>
    <scope>LEVEL OF PROTEIN EXPRESSION [LARGE SCALE ANALYSIS]</scope>
</reference>
<reference key="9">
    <citation type="journal article" date="2008" name="Mol. Cell. Biol.">
        <title>Phosphorylation by casein kinase 2 regulates Nap1 localization and function.</title>
        <authorList>
            <person name="Calvert M.E.K."/>
            <person name="Keck K.M."/>
            <person name="Ptak C."/>
            <person name="Shabanowitz J."/>
            <person name="Hunt D.F."/>
            <person name="Pemberton L.F."/>
        </authorList>
    </citation>
    <scope>INTERACTION WITH NAP1</scope>
    <scope>IDENTIFICATION BY MASS SPECTROMETRY</scope>
</reference>
<reference key="10">
    <citation type="journal article" date="2008" name="Mol. Cell. Proteomics">
        <title>A multidimensional chromatography technology for in-depth phosphoproteome analysis.</title>
        <authorList>
            <person name="Albuquerque C.P."/>
            <person name="Smolka M.B."/>
            <person name="Payne S.H."/>
            <person name="Bafna V."/>
            <person name="Eng J."/>
            <person name="Zhou H."/>
        </authorList>
    </citation>
    <scope>PHOSPHORYLATION [LARGE SCALE ANALYSIS] AT SER-675; SER-822 AND SER-825</scope>
    <scope>IDENTIFICATION BY MASS SPECTROMETRY [LARGE SCALE ANALYSIS]</scope>
</reference>
<reference key="11">
    <citation type="journal article" date="2009" name="Science">
        <title>Global analysis of Cdk1 substrate phosphorylation sites provides insights into evolution.</title>
        <authorList>
            <person name="Holt L.J."/>
            <person name="Tuch B.B."/>
            <person name="Villen J."/>
            <person name="Johnson A.D."/>
            <person name="Gygi S.P."/>
            <person name="Morgan D.O."/>
        </authorList>
    </citation>
    <scope>PHOSPHORYLATION [LARGE SCALE ANALYSIS] AT SER-396; SER-707; SER-777 AND SER-871</scope>
    <scope>IDENTIFICATION BY MASS SPECTROMETRY [LARGE SCALE ANALYSIS]</scope>
</reference>
<feature type="chain" id="PRO_0000086109" description="Probable serine/threonine-protein kinase KCC4">
    <location>
        <begin position="1"/>
        <end position="1037"/>
    </location>
</feature>
<feature type="domain" description="Protein kinase" evidence="1">
    <location>
        <begin position="21"/>
        <end position="285"/>
    </location>
</feature>
<feature type="region of interest" description="Disordered" evidence="3">
    <location>
        <begin position="372"/>
        <end position="494"/>
    </location>
</feature>
<feature type="region of interest" description="Disordered" evidence="3">
    <location>
        <begin position="746"/>
        <end position="804"/>
    </location>
</feature>
<feature type="region of interest" description="Disordered" evidence="3">
    <location>
        <begin position="810"/>
        <end position="829"/>
    </location>
</feature>
<feature type="region of interest" description="Disordered" evidence="3">
    <location>
        <begin position="861"/>
        <end position="918"/>
    </location>
</feature>
<feature type="compositionally biased region" description="Basic residues" evidence="3">
    <location>
        <begin position="372"/>
        <end position="387"/>
    </location>
</feature>
<feature type="compositionally biased region" description="Low complexity" evidence="3">
    <location>
        <begin position="388"/>
        <end position="404"/>
    </location>
</feature>
<feature type="compositionally biased region" description="Basic residues" evidence="3">
    <location>
        <begin position="408"/>
        <end position="427"/>
    </location>
</feature>
<feature type="compositionally biased region" description="Polar residues" evidence="3">
    <location>
        <begin position="453"/>
        <end position="465"/>
    </location>
</feature>
<feature type="compositionally biased region" description="Basic residues" evidence="3">
    <location>
        <begin position="469"/>
        <end position="480"/>
    </location>
</feature>
<feature type="compositionally biased region" description="Low complexity" evidence="3">
    <location>
        <begin position="481"/>
        <end position="494"/>
    </location>
</feature>
<feature type="compositionally biased region" description="Polar residues" evidence="3">
    <location>
        <begin position="861"/>
        <end position="873"/>
    </location>
</feature>
<feature type="compositionally biased region" description="Basic and acidic residues" evidence="3">
    <location>
        <begin position="879"/>
        <end position="888"/>
    </location>
</feature>
<feature type="active site" description="Proton acceptor" evidence="1 2">
    <location>
        <position position="152"/>
    </location>
</feature>
<feature type="binding site" evidence="1">
    <location>
        <begin position="27"/>
        <end position="35"/>
    </location>
    <ligand>
        <name>ATP</name>
        <dbReference type="ChEBI" id="CHEBI:30616"/>
    </ligand>
</feature>
<feature type="binding site" evidence="1">
    <location>
        <position position="50"/>
    </location>
    <ligand>
        <name>ATP</name>
        <dbReference type="ChEBI" id="CHEBI:30616"/>
    </ligand>
</feature>
<feature type="modified residue" description="Phosphoserine" evidence="11">
    <location>
        <position position="396"/>
    </location>
</feature>
<feature type="modified residue" description="Phosphoserine" evidence="10">
    <location>
        <position position="675"/>
    </location>
</feature>
<feature type="modified residue" description="Phosphoserine" evidence="11">
    <location>
        <position position="707"/>
    </location>
</feature>
<feature type="modified residue" description="Phosphoserine" evidence="11">
    <location>
        <position position="777"/>
    </location>
</feature>
<feature type="modified residue" description="Phosphoserine" evidence="10">
    <location>
        <position position="822"/>
    </location>
</feature>
<feature type="modified residue" description="Phosphoserine" evidence="10">
    <location>
        <position position="825"/>
    </location>
</feature>
<feature type="modified residue" description="Phosphoserine" evidence="11">
    <location>
        <position position="871"/>
    </location>
</feature>
<feature type="helix" evidence="12">
    <location>
        <begin position="921"/>
        <end position="924"/>
    </location>
</feature>
<feature type="helix" evidence="12">
    <location>
        <begin position="925"/>
        <end position="927"/>
    </location>
</feature>
<feature type="strand" evidence="12">
    <location>
        <begin position="930"/>
        <end position="933"/>
    </location>
</feature>
<feature type="strand" evidence="12">
    <location>
        <begin position="938"/>
        <end position="942"/>
    </location>
</feature>
<feature type="helix" evidence="12">
    <location>
        <begin position="944"/>
        <end position="956"/>
    </location>
</feature>
<feature type="helix" evidence="12">
    <location>
        <begin position="959"/>
        <end position="961"/>
    </location>
</feature>
<feature type="strand" evidence="12">
    <location>
        <begin position="963"/>
        <end position="969"/>
    </location>
</feature>
<feature type="turn" evidence="12">
    <location>
        <begin position="970"/>
        <end position="973"/>
    </location>
</feature>
<feature type="strand" evidence="12">
    <location>
        <begin position="974"/>
        <end position="979"/>
    </location>
</feature>
<feature type="strand" evidence="12">
    <location>
        <begin position="984"/>
        <end position="986"/>
    </location>
</feature>
<feature type="strand" evidence="12">
    <location>
        <begin position="990"/>
        <end position="998"/>
    </location>
</feature>
<feature type="strand" evidence="12">
    <location>
        <begin position="1004"/>
        <end position="1013"/>
    </location>
</feature>
<feature type="helix" evidence="12">
    <location>
        <begin position="1015"/>
        <end position="1031"/>
    </location>
</feature>